<gene>
    <name evidence="1" type="primary">rpmJ</name>
    <name type="ordered locus">CT2166</name>
</gene>
<comment type="similarity">
    <text evidence="1">Belongs to the bacterial ribosomal protein bL36 family.</text>
</comment>
<feature type="chain" id="PRO_0000126171" description="Large ribosomal subunit protein bL36">
    <location>
        <begin position="1"/>
        <end position="38"/>
    </location>
</feature>
<keyword id="KW-1185">Reference proteome</keyword>
<keyword id="KW-0687">Ribonucleoprotein</keyword>
<keyword id="KW-0689">Ribosomal protein</keyword>
<proteinExistence type="inferred from homology"/>
<sequence length="38" mass="4586">MKIYSSIKKRCEHCRIIKRKGKRFVICKVNPSHKQRQG</sequence>
<accession>Q8KAJ4</accession>
<organism>
    <name type="scientific">Chlorobaculum tepidum (strain ATCC 49652 / DSM 12025 / NBRC 103806 / TLS)</name>
    <name type="common">Chlorobium tepidum</name>
    <dbReference type="NCBI Taxonomy" id="194439"/>
    <lineage>
        <taxon>Bacteria</taxon>
        <taxon>Pseudomonadati</taxon>
        <taxon>Chlorobiota</taxon>
        <taxon>Chlorobiia</taxon>
        <taxon>Chlorobiales</taxon>
        <taxon>Chlorobiaceae</taxon>
        <taxon>Chlorobaculum</taxon>
    </lineage>
</organism>
<evidence type="ECO:0000255" key="1">
    <source>
        <dbReference type="HAMAP-Rule" id="MF_00251"/>
    </source>
</evidence>
<evidence type="ECO:0000305" key="2"/>
<protein>
    <recommendedName>
        <fullName evidence="1">Large ribosomal subunit protein bL36</fullName>
    </recommendedName>
    <alternativeName>
        <fullName evidence="2">50S ribosomal protein L36</fullName>
    </alternativeName>
</protein>
<name>RL36_CHLTE</name>
<reference key="1">
    <citation type="journal article" date="2002" name="Proc. Natl. Acad. Sci. U.S.A.">
        <title>The complete genome sequence of Chlorobium tepidum TLS, a photosynthetic, anaerobic, green-sulfur bacterium.</title>
        <authorList>
            <person name="Eisen J.A."/>
            <person name="Nelson K.E."/>
            <person name="Paulsen I.T."/>
            <person name="Heidelberg J.F."/>
            <person name="Wu M."/>
            <person name="Dodson R.J."/>
            <person name="DeBoy R.T."/>
            <person name="Gwinn M.L."/>
            <person name="Nelson W.C."/>
            <person name="Haft D.H."/>
            <person name="Hickey E.K."/>
            <person name="Peterson J.D."/>
            <person name="Durkin A.S."/>
            <person name="Kolonay J.F."/>
            <person name="Yang F."/>
            <person name="Holt I.E."/>
            <person name="Umayam L.A."/>
            <person name="Mason T.M."/>
            <person name="Brenner M."/>
            <person name="Shea T.P."/>
            <person name="Parksey D.S."/>
            <person name="Nierman W.C."/>
            <person name="Feldblyum T.V."/>
            <person name="Hansen C.L."/>
            <person name="Craven M.B."/>
            <person name="Radune D."/>
            <person name="Vamathevan J.J."/>
            <person name="Khouri H.M."/>
            <person name="White O."/>
            <person name="Gruber T.M."/>
            <person name="Ketchum K.A."/>
            <person name="Venter J.C."/>
            <person name="Tettelin H."/>
            <person name="Bryant D.A."/>
            <person name="Fraser C.M."/>
        </authorList>
    </citation>
    <scope>NUCLEOTIDE SEQUENCE [LARGE SCALE GENOMIC DNA]</scope>
    <source>
        <strain>ATCC 49652 / DSM 12025 / NBRC 103806 / TLS</strain>
    </source>
</reference>
<dbReference type="EMBL" id="AE006470">
    <property type="protein sequence ID" value="AAM73382.1"/>
    <property type="molecule type" value="Genomic_DNA"/>
</dbReference>
<dbReference type="RefSeq" id="NP_663040.1">
    <property type="nucleotide sequence ID" value="NC_002932.3"/>
</dbReference>
<dbReference type="RefSeq" id="WP_010933819.1">
    <property type="nucleotide sequence ID" value="NC_002932.3"/>
</dbReference>
<dbReference type="SMR" id="Q8KAJ4"/>
<dbReference type="STRING" id="194439.CT2166"/>
<dbReference type="EnsemblBacteria" id="AAM73382">
    <property type="protein sequence ID" value="AAM73382"/>
    <property type="gene ID" value="CT2166"/>
</dbReference>
<dbReference type="KEGG" id="cte:CT2166"/>
<dbReference type="PATRIC" id="fig|194439.7.peg.1965"/>
<dbReference type="eggNOG" id="COG0257">
    <property type="taxonomic scope" value="Bacteria"/>
</dbReference>
<dbReference type="HOGENOM" id="CLU_135723_6_2_10"/>
<dbReference type="OrthoDB" id="9801558at2"/>
<dbReference type="Proteomes" id="UP000001007">
    <property type="component" value="Chromosome"/>
</dbReference>
<dbReference type="GO" id="GO:0005737">
    <property type="term" value="C:cytoplasm"/>
    <property type="evidence" value="ECO:0007669"/>
    <property type="project" value="UniProtKB-ARBA"/>
</dbReference>
<dbReference type="GO" id="GO:1990904">
    <property type="term" value="C:ribonucleoprotein complex"/>
    <property type="evidence" value="ECO:0007669"/>
    <property type="project" value="UniProtKB-KW"/>
</dbReference>
<dbReference type="GO" id="GO:0005840">
    <property type="term" value="C:ribosome"/>
    <property type="evidence" value="ECO:0007669"/>
    <property type="project" value="UniProtKB-KW"/>
</dbReference>
<dbReference type="GO" id="GO:0003735">
    <property type="term" value="F:structural constituent of ribosome"/>
    <property type="evidence" value="ECO:0007669"/>
    <property type="project" value="InterPro"/>
</dbReference>
<dbReference type="GO" id="GO:0006412">
    <property type="term" value="P:translation"/>
    <property type="evidence" value="ECO:0007669"/>
    <property type="project" value="UniProtKB-UniRule"/>
</dbReference>
<dbReference type="HAMAP" id="MF_00251">
    <property type="entry name" value="Ribosomal_bL36"/>
    <property type="match status" value="1"/>
</dbReference>
<dbReference type="InterPro" id="IPR000473">
    <property type="entry name" value="Ribosomal_bL36"/>
</dbReference>
<dbReference type="InterPro" id="IPR035977">
    <property type="entry name" value="Ribosomal_bL36_sp"/>
</dbReference>
<dbReference type="NCBIfam" id="TIGR01022">
    <property type="entry name" value="rpmJ_bact"/>
    <property type="match status" value="1"/>
</dbReference>
<dbReference type="PANTHER" id="PTHR42888">
    <property type="entry name" value="50S RIBOSOMAL PROTEIN L36, CHLOROPLASTIC"/>
    <property type="match status" value="1"/>
</dbReference>
<dbReference type="PANTHER" id="PTHR42888:SF1">
    <property type="entry name" value="LARGE RIBOSOMAL SUBUNIT PROTEIN BL36C"/>
    <property type="match status" value="1"/>
</dbReference>
<dbReference type="Pfam" id="PF00444">
    <property type="entry name" value="Ribosomal_L36"/>
    <property type="match status" value="1"/>
</dbReference>
<dbReference type="SUPFAM" id="SSF57840">
    <property type="entry name" value="Ribosomal protein L36"/>
    <property type="match status" value="1"/>
</dbReference>
<dbReference type="PROSITE" id="PS00828">
    <property type="entry name" value="RIBOSOMAL_L36"/>
    <property type="match status" value="1"/>
</dbReference>